<feature type="chain" id="PRO_1000118980" description="Adenylate kinase">
    <location>
        <begin position="1"/>
        <end position="217"/>
    </location>
</feature>
<feature type="region of interest" description="NMP" evidence="1">
    <location>
        <begin position="30"/>
        <end position="59"/>
    </location>
</feature>
<feature type="region of interest" description="LID" evidence="1">
    <location>
        <begin position="122"/>
        <end position="159"/>
    </location>
</feature>
<feature type="binding site" evidence="1">
    <location>
        <begin position="10"/>
        <end position="15"/>
    </location>
    <ligand>
        <name>ATP</name>
        <dbReference type="ChEBI" id="CHEBI:30616"/>
    </ligand>
</feature>
<feature type="binding site" evidence="1">
    <location>
        <position position="31"/>
    </location>
    <ligand>
        <name>AMP</name>
        <dbReference type="ChEBI" id="CHEBI:456215"/>
    </ligand>
</feature>
<feature type="binding site" evidence="1">
    <location>
        <position position="36"/>
    </location>
    <ligand>
        <name>AMP</name>
        <dbReference type="ChEBI" id="CHEBI:456215"/>
    </ligand>
</feature>
<feature type="binding site" evidence="1">
    <location>
        <begin position="57"/>
        <end position="59"/>
    </location>
    <ligand>
        <name>AMP</name>
        <dbReference type="ChEBI" id="CHEBI:456215"/>
    </ligand>
</feature>
<feature type="binding site" evidence="1">
    <location>
        <begin position="85"/>
        <end position="88"/>
    </location>
    <ligand>
        <name>AMP</name>
        <dbReference type="ChEBI" id="CHEBI:456215"/>
    </ligand>
</feature>
<feature type="binding site" evidence="1">
    <location>
        <position position="92"/>
    </location>
    <ligand>
        <name>AMP</name>
        <dbReference type="ChEBI" id="CHEBI:456215"/>
    </ligand>
</feature>
<feature type="binding site" evidence="1">
    <location>
        <position position="123"/>
    </location>
    <ligand>
        <name>ATP</name>
        <dbReference type="ChEBI" id="CHEBI:30616"/>
    </ligand>
</feature>
<feature type="binding site" evidence="1">
    <location>
        <begin position="132"/>
        <end position="133"/>
    </location>
    <ligand>
        <name>ATP</name>
        <dbReference type="ChEBI" id="CHEBI:30616"/>
    </ligand>
</feature>
<feature type="binding site" evidence="1">
    <location>
        <position position="156"/>
    </location>
    <ligand>
        <name>AMP</name>
        <dbReference type="ChEBI" id="CHEBI:456215"/>
    </ligand>
</feature>
<feature type="binding site" evidence="1">
    <location>
        <position position="167"/>
    </location>
    <ligand>
        <name>AMP</name>
        <dbReference type="ChEBI" id="CHEBI:456215"/>
    </ligand>
</feature>
<feature type="binding site" evidence="1">
    <location>
        <position position="202"/>
    </location>
    <ligand>
        <name>ATP</name>
        <dbReference type="ChEBI" id="CHEBI:30616"/>
    </ligand>
</feature>
<dbReference type="EC" id="2.7.4.3" evidence="1"/>
<dbReference type="EMBL" id="CP001172">
    <property type="protein sequence ID" value="ACJ56210.1"/>
    <property type="molecule type" value="Genomic_DNA"/>
</dbReference>
<dbReference type="RefSeq" id="WP_001220244.1">
    <property type="nucleotide sequence ID" value="NZ_CP001172.1"/>
</dbReference>
<dbReference type="SMR" id="B7GXT4"/>
<dbReference type="GeneID" id="92892986"/>
<dbReference type="HOGENOM" id="CLU_032354_1_2_6"/>
<dbReference type="UniPathway" id="UPA00588">
    <property type="reaction ID" value="UER00649"/>
</dbReference>
<dbReference type="Proteomes" id="UP000006924">
    <property type="component" value="Chromosome"/>
</dbReference>
<dbReference type="GO" id="GO:0005737">
    <property type="term" value="C:cytoplasm"/>
    <property type="evidence" value="ECO:0007669"/>
    <property type="project" value="UniProtKB-SubCell"/>
</dbReference>
<dbReference type="GO" id="GO:0004017">
    <property type="term" value="F:adenylate kinase activity"/>
    <property type="evidence" value="ECO:0007669"/>
    <property type="project" value="UniProtKB-UniRule"/>
</dbReference>
<dbReference type="GO" id="GO:0005524">
    <property type="term" value="F:ATP binding"/>
    <property type="evidence" value="ECO:0007669"/>
    <property type="project" value="UniProtKB-UniRule"/>
</dbReference>
<dbReference type="GO" id="GO:0044209">
    <property type="term" value="P:AMP salvage"/>
    <property type="evidence" value="ECO:0007669"/>
    <property type="project" value="UniProtKB-UniRule"/>
</dbReference>
<dbReference type="CDD" id="cd01428">
    <property type="entry name" value="ADK"/>
    <property type="match status" value="1"/>
</dbReference>
<dbReference type="FunFam" id="3.40.50.300:FF:000106">
    <property type="entry name" value="Adenylate kinase mitochondrial"/>
    <property type="match status" value="1"/>
</dbReference>
<dbReference type="Gene3D" id="3.40.50.300">
    <property type="entry name" value="P-loop containing nucleotide triphosphate hydrolases"/>
    <property type="match status" value="1"/>
</dbReference>
<dbReference type="HAMAP" id="MF_00235">
    <property type="entry name" value="Adenylate_kinase_Adk"/>
    <property type="match status" value="1"/>
</dbReference>
<dbReference type="InterPro" id="IPR006259">
    <property type="entry name" value="Adenyl_kin_sub"/>
</dbReference>
<dbReference type="InterPro" id="IPR000850">
    <property type="entry name" value="Adenylat/UMP-CMP_kin"/>
</dbReference>
<dbReference type="InterPro" id="IPR033690">
    <property type="entry name" value="Adenylat_kinase_CS"/>
</dbReference>
<dbReference type="InterPro" id="IPR007862">
    <property type="entry name" value="Adenylate_kinase_lid-dom"/>
</dbReference>
<dbReference type="InterPro" id="IPR027417">
    <property type="entry name" value="P-loop_NTPase"/>
</dbReference>
<dbReference type="NCBIfam" id="TIGR01351">
    <property type="entry name" value="adk"/>
    <property type="match status" value="1"/>
</dbReference>
<dbReference type="NCBIfam" id="NF001379">
    <property type="entry name" value="PRK00279.1-1"/>
    <property type="match status" value="1"/>
</dbReference>
<dbReference type="NCBIfam" id="NF001380">
    <property type="entry name" value="PRK00279.1-2"/>
    <property type="match status" value="1"/>
</dbReference>
<dbReference type="NCBIfam" id="NF001381">
    <property type="entry name" value="PRK00279.1-3"/>
    <property type="match status" value="1"/>
</dbReference>
<dbReference type="NCBIfam" id="NF011100">
    <property type="entry name" value="PRK14527.1"/>
    <property type="match status" value="1"/>
</dbReference>
<dbReference type="PANTHER" id="PTHR23359">
    <property type="entry name" value="NUCLEOTIDE KINASE"/>
    <property type="match status" value="1"/>
</dbReference>
<dbReference type="Pfam" id="PF00406">
    <property type="entry name" value="ADK"/>
    <property type="match status" value="1"/>
</dbReference>
<dbReference type="Pfam" id="PF05191">
    <property type="entry name" value="ADK_lid"/>
    <property type="match status" value="1"/>
</dbReference>
<dbReference type="PRINTS" id="PR00094">
    <property type="entry name" value="ADENYLTKNASE"/>
</dbReference>
<dbReference type="SUPFAM" id="SSF52540">
    <property type="entry name" value="P-loop containing nucleoside triphosphate hydrolases"/>
    <property type="match status" value="1"/>
</dbReference>
<dbReference type="PROSITE" id="PS00113">
    <property type="entry name" value="ADENYLATE_KINASE"/>
    <property type="match status" value="1"/>
</dbReference>
<accession>B7GXT4</accession>
<evidence type="ECO:0000255" key="1">
    <source>
        <dbReference type="HAMAP-Rule" id="MF_00235"/>
    </source>
</evidence>
<gene>
    <name evidence="1" type="primary">adk</name>
    <name type="ordered locus">ABBFA_002586</name>
</gene>
<reference key="1">
    <citation type="journal article" date="2008" name="J. Bacteriol.">
        <title>Comparative genome sequence analysis of multidrug-resistant Acinetobacter baumannii.</title>
        <authorList>
            <person name="Adams M.D."/>
            <person name="Goglin K."/>
            <person name="Molyneaux N."/>
            <person name="Hujer K.M."/>
            <person name="Lavender H."/>
            <person name="Jamison J.J."/>
            <person name="MacDonald I.J."/>
            <person name="Martin K.M."/>
            <person name="Russo T."/>
            <person name="Campagnari A.A."/>
            <person name="Hujer A.M."/>
            <person name="Bonomo R.A."/>
            <person name="Gill S.R."/>
        </authorList>
    </citation>
    <scope>NUCLEOTIDE SEQUENCE [LARGE SCALE GENOMIC DNA]</scope>
    <source>
        <strain>AB307-0294</strain>
    </source>
</reference>
<keyword id="KW-0067">ATP-binding</keyword>
<keyword id="KW-0963">Cytoplasm</keyword>
<keyword id="KW-0418">Kinase</keyword>
<keyword id="KW-0545">Nucleotide biosynthesis</keyword>
<keyword id="KW-0547">Nucleotide-binding</keyword>
<keyword id="KW-0808">Transferase</keyword>
<name>KAD_ACIB3</name>
<proteinExistence type="inferred from homology"/>
<protein>
    <recommendedName>
        <fullName evidence="1">Adenylate kinase</fullName>
        <shortName evidence="1">AK</shortName>
        <ecNumber evidence="1">2.7.4.3</ecNumber>
    </recommendedName>
    <alternativeName>
        <fullName evidence="1">ATP-AMP transphosphorylase</fullName>
    </alternativeName>
    <alternativeName>
        <fullName evidence="1">ATP:AMP phosphotransferase</fullName>
    </alternativeName>
    <alternativeName>
        <fullName evidence="1">Adenylate monophosphate kinase</fullName>
    </alternativeName>
</protein>
<comment type="function">
    <text evidence="1">Catalyzes the reversible transfer of the terminal phosphate group between ATP and AMP. Plays an important role in cellular energy homeostasis and in adenine nucleotide metabolism.</text>
</comment>
<comment type="catalytic activity">
    <reaction evidence="1">
        <text>AMP + ATP = 2 ADP</text>
        <dbReference type="Rhea" id="RHEA:12973"/>
        <dbReference type="ChEBI" id="CHEBI:30616"/>
        <dbReference type="ChEBI" id="CHEBI:456215"/>
        <dbReference type="ChEBI" id="CHEBI:456216"/>
        <dbReference type="EC" id="2.7.4.3"/>
    </reaction>
</comment>
<comment type="pathway">
    <text evidence="1">Purine metabolism; AMP biosynthesis via salvage pathway; AMP from ADP: step 1/1.</text>
</comment>
<comment type="subunit">
    <text evidence="1">Monomer.</text>
</comment>
<comment type="subcellular location">
    <subcellularLocation>
        <location evidence="1">Cytoplasm</location>
    </subcellularLocation>
</comment>
<comment type="domain">
    <text evidence="1">Consists of three domains, a large central CORE domain and two small peripheral domains, NMPbind and LID, which undergo movements during catalysis. The LID domain closes over the site of phosphoryl transfer upon ATP binding. Assembling and dissambling the active center during each catalytic cycle provides an effective means to prevent ATP hydrolysis.</text>
</comment>
<comment type="similarity">
    <text evidence="1">Belongs to the adenylate kinase family.</text>
</comment>
<organism>
    <name type="scientific">Acinetobacter baumannii (strain AB307-0294)</name>
    <dbReference type="NCBI Taxonomy" id="557600"/>
    <lineage>
        <taxon>Bacteria</taxon>
        <taxon>Pseudomonadati</taxon>
        <taxon>Pseudomonadota</taxon>
        <taxon>Gammaproteobacteria</taxon>
        <taxon>Moraxellales</taxon>
        <taxon>Moraxellaceae</taxon>
        <taxon>Acinetobacter</taxon>
        <taxon>Acinetobacter calcoaceticus/baumannii complex</taxon>
    </lineage>
</organism>
<sequence>MRIILLGPPGAGKGTQAQLICKRYNIPQISTGDMLRAAIREGTELGLKAKSVMESGGLVSDELIIGLVKERIAQPDCVNGCIFDGFPRTIPQAEALEKEGISIDHVIEIDVPDEEIVKRLSGRRQHPASGRVYHVVYNPPKVEGKDDETGEDLVQRPDDQEETIRKRLASYHTETEQLVGFYQGRAASGENAPTYDKLDGLRTIEDVQKDLFNILDK</sequence>